<keyword id="KW-0687">Ribonucleoprotein</keyword>
<keyword id="KW-0689">Ribosomal protein</keyword>
<keyword id="KW-0694">RNA-binding</keyword>
<keyword id="KW-0699">rRNA-binding</keyword>
<keyword id="KW-0820">tRNA-binding</keyword>
<feature type="chain" id="PRO_1000014208" description="Small ribosomal subunit protein uS7">
    <location>
        <begin position="1"/>
        <end position="156"/>
    </location>
</feature>
<dbReference type="EMBL" id="CP000269">
    <property type="protein sequence ID" value="ABR88392.1"/>
    <property type="molecule type" value="Genomic_DNA"/>
</dbReference>
<dbReference type="RefSeq" id="WP_012081253.1">
    <property type="nucleotide sequence ID" value="NC_009659.1"/>
</dbReference>
<dbReference type="SMR" id="A6T3K8"/>
<dbReference type="STRING" id="375286.mma_3415"/>
<dbReference type="KEGG" id="mms:mma_3415"/>
<dbReference type="eggNOG" id="COG0049">
    <property type="taxonomic scope" value="Bacteria"/>
</dbReference>
<dbReference type="HOGENOM" id="CLU_072226_1_1_4"/>
<dbReference type="OrthoDB" id="9807653at2"/>
<dbReference type="Proteomes" id="UP000006388">
    <property type="component" value="Chromosome"/>
</dbReference>
<dbReference type="GO" id="GO:0015935">
    <property type="term" value="C:small ribosomal subunit"/>
    <property type="evidence" value="ECO:0007669"/>
    <property type="project" value="InterPro"/>
</dbReference>
<dbReference type="GO" id="GO:0019843">
    <property type="term" value="F:rRNA binding"/>
    <property type="evidence" value="ECO:0007669"/>
    <property type="project" value="UniProtKB-UniRule"/>
</dbReference>
<dbReference type="GO" id="GO:0003735">
    <property type="term" value="F:structural constituent of ribosome"/>
    <property type="evidence" value="ECO:0007669"/>
    <property type="project" value="InterPro"/>
</dbReference>
<dbReference type="GO" id="GO:0000049">
    <property type="term" value="F:tRNA binding"/>
    <property type="evidence" value="ECO:0007669"/>
    <property type="project" value="UniProtKB-UniRule"/>
</dbReference>
<dbReference type="GO" id="GO:0006412">
    <property type="term" value="P:translation"/>
    <property type="evidence" value="ECO:0007669"/>
    <property type="project" value="UniProtKB-UniRule"/>
</dbReference>
<dbReference type="CDD" id="cd14869">
    <property type="entry name" value="uS7_Bacteria"/>
    <property type="match status" value="1"/>
</dbReference>
<dbReference type="FunFam" id="1.10.455.10:FF:000001">
    <property type="entry name" value="30S ribosomal protein S7"/>
    <property type="match status" value="1"/>
</dbReference>
<dbReference type="Gene3D" id="1.10.455.10">
    <property type="entry name" value="Ribosomal protein S7 domain"/>
    <property type="match status" value="1"/>
</dbReference>
<dbReference type="HAMAP" id="MF_00480_B">
    <property type="entry name" value="Ribosomal_uS7_B"/>
    <property type="match status" value="1"/>
</dbReference>
<dbReference type="InterPro" id="IPR000235">
    <property type="entry name" value="Ribosomal_uS7"/>
</dbReference>
<dbReference type="InterPro" id="IPR005717">
    <property type="entry name" value="Ribosomal_uS7_bac/org-type"/>
</dbReference>
<dbReference type="InterPro" id="IPR020606">
    <property type="entry name" value="Ribosomal_uS7_CS"/>
</dbReference>
<dbReference type="InterPro" id="IPR023798">
    <property type="entry name" value="Ribosomal_uS7_dom"/>
</dbReference>
<dbReference type="InterPro" id="IPR036823">
    <property type="entry name" value="Ribosomal_uS7_dom_sf"/>
</dbReference>
<dbReference type="NCBIfam" id="TIGR01029">
    <property type="entry name" value="rpsG_bact"/>
    <property type="match status" value="1"/>
</dbReference>
<dbReference type="PANTHER" id="PTHR11205">
    <property type="entry name" value="RIBOSOMAL PROTEIN S7"/>
    <property type="match status" value="1"/>
</dbReference>
<dbReference type="Pfam" id="PF00177">
    <property type="entry name" value="Ribosomal_S7"/>
    <property type="match status" value="1"/>
</dbReference>
<dbReference type="PIRSF" id="PIRSF002122">
    <property type="entry name" value="RPS7p_RPS7a_RPS5e_RPS7o"/>
    <property type="match status" value="1"/>
</dbReference>
<dbReference type="SUPFAM" id="SSF47973">
    <property type="entry name" value="Ribosomal protein S7"/>
    <property type="match status" value="1"/>
</dbReference>
<dbReference type="PROSITE" id="PS00052">
    <property type="entry name" value="RIBOSOMAL_S7"/>
    <property type="match status" value="1"/>
</dbReference>
<name>RS7_JANMA</name>
<accession>A6T3K8</accession>
<comment type="function">
    <text evidence="1">One of the primary rRNA binding proteins, it binds directly to 16S rRNA where it nucleates assembly of the head domain of the 30S subunit. Is located at the subunit interface close to the decoding center, probably blocks exit of the E-site tRNA.</text>
</comment>
<comment type="subunit">
    <text evidence="1">Part of the 30S ribosomal subunit. Contacts proteins S9 and S11.</text>
</comment>
<comment type="similarity">
    <text evidence="1">Belongs to the universal ribosomal protein uS7 family.</text>
</comment>
<reference key="1">
    <citation type="journal article" date="2007" name="PLoS Genet.">
        <title>Genome analysis of Minibacterium massiliensis highlights the convergent evolution of water-living bacteria.</title>
        <authorList>
            <person name="Audic S."/>
            <person name="Robert C."/>
            <person name="Campagna B."/>
            <person name="Parinello H."/>
            <person name="Claverie J.-M."/>
            <person name="Raoult D."/>
            <person name="Drancourt M."/>
        </authorList>
    </citation>
    <scope>NUCLEOTIDE SEQUENCE [LARGE SCALE GENOMIC DNA]</scope>
    <source>
        <strain>Marseille</strain>
    </source>
</reference>
<proteinExistence type="inferred from homology"/>
<gene>
    <name evidence="1" type="primary">rpsG</name>
    <name type="ordered locus">mma_3415</name>
</gene>
<protein>
    <recommendedName>
        <fullName evidence="1">Small ribosomal subunit protein uS7</fullName>
    </recommendedName>
    <alternativeName>
        <fullName evidence="2">30S ribosomal protein S7</fullName>
    </alternativeName>
</protein>
<evidence type="ECO:0000255" key="1">
    <source>
        <dbReference type="HAMAP-Rule" id="MF_00480"/>
    </source>
</evidence>
<evidence type="ECO:0000305" key="2"/>
<sequence>MPRRREVPKREILPDPKFGNVDVAKFVNVLMLSGKKSVAENIIYGAFEHIQTKSGKDPLEVFTAAIANCKPLVEVKSRRVGGANYQVPVEVRPVRRMALSMRWLREAANKRSEKSMPQRLAGELLEAAESRGGAMKKRDEVHRMAEANKAFSHFRF</sequence>
<organism>
    <name type="scientific">Janthinobacterium sp. (strain Marseille)</name>
    <name type="common">Minibacterium massiliensis</name>
    <dbReference type="NCBI Taxonomy" id="375286"/>
    <lineage>
        <taxon>Bacteria</taxon>
        <taxon>Pseudomonadati</taxon>
        <taxon>Pseudomonadota</taxon>
        <taxon>Betaproteobacteria</taxon>
        <taxon>Burkholderiales</taxon>
        <taxon>Oxalobacteraceae</taxon>
        <taxon>Janthinobacterium</taxon>
    </lineage>
</organism>